<evidence type="ECO:0000255" key="1">
    <source>
        <dbReference type="HAMAP-Rule" id="MF_01394"/>
    </source>
</evidence>
<evidence type="ECO:0000305" key="2"/>
<comment type="function">
    <text evidence="1">NDH-1 shuttles electrons from NADH, via FMN and iron-sulfur (Fe-S) centers, to quinones in the respiratory chain. The immediate electron acceptor for the enzyme in this species is believed to be ubiquinone. Couples the redox reaction to proton translocation (for every two electrons transferred, four hydrogen ions are translocated across the cytoplasmic membrane), and thus conserves the redox energy in a proton gradient.</text>
</comment>
<comment type="catalytic activity">
    <reaction evidence="1">
        <text>a quinone + NADH + 5 H(+)(in) = a quinol + NAD(+) + 4 H(+)(out)</text>
        <dbReference type="Rhea" id="RHEA:57888"/>
        <dbReference type="ChEBI" id="CHEBI:15378"/>
        <dbReference type="ChEBI" id="CHEBI:24646"/>
        <dbReference type="ChEBI" id="CHEBI:57540"/>
        <dbReference type="ChEBI" id="CHEBI:57945"/>
        <dbReference type="ChEBI" id="CHEBI:132124"/>
    </reaction>
</comment>
<comment type="subunit">
    <text evidence="1">NDH-1 is composed of 14 different subunits. Subunits NuoA, H, J, K, L, M, N constitute the membrane sector of the complex.</text>
</comment>
<comment type="subcellular location">
    <subcellularLocation>
        <location evidence="1">Cell inner membrane</location>
        <topology evidence="1">Multi-pass membrane protein</topology>
    </subcellularLocation>
</comment>
<comment type="similarity">
    <text evidence="1">Belongs to the complex I subunit 3 family.</text>
</comment>
<comment type="sequence caution" evidence="2">
    <conflict type="erroneous initiation">
        <sequence resource="EMBL-CDS" id="ABM58551"/>
    </conflict>
</comment>
<gene>
    <name evidence="1" type="primary">nuoA</name>
    <name type="ordered locus">Veis_2813</name>
</gene>
<proteinExistence type="inferred from homology"/>
<protein>
    <recommendedName>
        <fullName evidence="1">NADH-quinone oxidoreductase subunit A</fullName>
        <ecNumber evidence="1">7.1.1.-</ecNumber>
    </recommendedName>
    <alternativeName>
        <fullName evidence="1">NADH dehydrogenase I subunit A</fullName>
    </alternativeName>
    <alternativeName>
        <fullName evidence="1">NDH-1 subunit A</fullName>
    </alternativeName>
    <alternativeName>
        <fullName evidence="1">NUO1</fullName>
    </alternativeName>
</protein>
<sequence>MNLDQYLPVLLFILVGIAVGVVPLVLGYVLGPNRPDAAKNSPYECGFEAFDDARMKFDVRYYLVAILFILFDLEIAFLFPWAVTLQQVGMAGFVAVLIFLTILVVGFAYEWKKGALDWE</sequence>
<reference key="1">
    <citation type="submission" date="2006-12" db="EMBL/GenBank/DDBJ databases">
        <title>Complete sequence of chromosome 1 of Verminephrobacter eiseniae EF01-2.</title>
        <authorList>
            <person name="Copeland A."/>
            <person name="Lucas S."/>
            <person name="Lapidus A."/>
            <person name="Barry K."/>
            <person name="Detter J.C."/>
            <person name="Glavina del Rio T."/>
            <person name="Dalin E."/>
            <person name="Tice H."/>
            <person name="Pitluck S."/>
            <person name="Chertkov O."/>
            <person name="Brettin T."/>
            <person name="Bruce D."/>
            <person name="Han C."/>
            <person name="Tapia R."/>
            <person name="Gilna P."/>
            <person name="Schmutz J."/>
            <person name="Larimer F."/>
            <person name="Land M."/>
            <person name="Hauser L."/>
            <person name="Kyrpides N."/>
            <person name="Kim E."/>
            <person name="Stahl D."/>
            <person name="Richardson P."/>
        </authorList>
    </citation>
    <scope>NUCLEOTIDE SEQUENCE [LARGE SCALE GENOMIC DNA]</scope>
    <source>
        <strain>EF01-2</strain>
    </source>
</reference>
<organism>
    <name type="scientific">Verminephrobacter eiseniae (strain EF01-2)</name>
    <dbReference type="NCBI Taxonomy" id="391735"/>
    <lineage>
        <taxon>Bacteria</taxon>
        <taxon>Pseudomonadati</taxon>
        <taxon>Pseudomonadota</taxon>
        <taxon>Betaproteobacteria</taxon>
        <taxon>Burkholderiales</taxon>
        <taxon>Comamonadaceae</taxon>
        <taxon>Verminephrobacter</taxon>
    </lineage>
</organism>
<accession>A1WLP4</accession>
<keyword id="KW-0997">Cell inner membrane</keyword>
<keyword id="KW-1003">Cell membrane</keyword>
<keyword id="KW-0472">Membrane</keyword>
<keyword id="KW-0520">NAD</keyword>
<keyword id="KW-0874">Quinone</keyword>
<keyword id="KW-1185">Reference proteome</keyword>
<keyword id="KW-1278">Translocase</keyword>
<keyword id="KW-0812">Transmembrane</keyword>
<keyword id="KW-1133">Transmembrane helix</keyword>
<keyword id="KW-0813">Transport</keyword>
<keyword id="KW-0830">Ubiquinone</keyword>
<feature type="chain" id="PRO_0000362797" description="NADH-quinone oxidoreductase subunit A">
    <location>
        <begin position="1"/>
        <end position="119"/>
    </location>
</feature>
<feature type="transmembrane region" description="Helical" evidence="1">
    <location>
        <begin position="9"/>
        <end position="29"/>
    </location>
</feature>
<feature type="transmembrane region" description="Helical" evidence="1">
    <location>
        <begin position="63"/>
        <end position="83"/>
    </location>
</feature>
<feature type="transmembrane region" description="Helical" evidence="1">
    <location>
        <begin position="88"/>
        <end position="108"/>
    </location>
</feature>
<dbReference type="EC" id="7.1.1.-" evidence="1"/>
<dbReference type="EMBL" id="CP000542">
    <property type="protein sequence ID" value="ABM58551.1"/>
    <property type="status" value="ALT_INIT"/>
    <property type="molecule type" value="Genomic_DNA"/>
</dbReference>
<dbReference type="RefSeq" id="WP_041950035.1">
    <property type="nucleotide sequence ID" value="NC_008786.1"/>
</dbReference>
<dbReference type="SMR" id="A1WLP4"/>
<dbReference type="STRING" id="391735.Veis_2813"/>
<dbReference type="GeneID" id="76461311"/>
<dbReference type="KEGG" id="vei:Veis_2813"/>
<dbReference type="eggNOG" id="COG0838">
    <property type="taxonomic scope" value="Bacteria"/>
</dbReference>
<dbReference type="HOGENOM" id="CLU_119549_3_1_4"/>
<dbReference type="OrthoDB" id="9791970at2"/>
<dbReference type="Proteomes" id="UP000000374">
    <property type="component" value="Chromosome"/>
</dbReference>
<dbReference type="GO" id="GO:0030964">
    <property type="term" value="C:NADH dehydrogenase complex"/>
    <property type="evidence" value="ECO:0007669"/>
    <property type="project" value="TreeGrafter"/>
</dbReference>
<dbReference type="GO" id="GO:0005886">
    <property type="term" value="C:plasma membrane"/>
    <property type="evidence" value="ECO:0007669"/>
    <property type="project" value="UniProtKB-SubCell"/>
</dbReference>
<dbReference type="GO" id="GO:0008137">
    <property type="term" value="F:NADH dehydrogenase (ubiquinone) activity"/>
    <property type="evidence" value="ECO:0007669"/>
    <property type="project" value="InterPro"/>
</dbReference>
<dbReference type="GO" id="GO:0050136">
    <property type="term" value="F:NADH:ubiquinone reductase (non-electrogenic) activity"/>
    <property type="evidence" value="ECO:0007669"/>
    <property type="project" value="UniProtKB-UniRule"/>
</dbReference>
<dbReference type="GO" id="GO:0048038">
    <property type="term" value="F:quinone binding"/>
    <property type="evidence" value="ECO:0007669"/>
    <property type="project" value="UniProtKB-KW"/>
</dbReference>
<dbReference type="FunFam" id="1.20.58.1610:FF:000004">
    <property type="entry name" value="NADH-quinone oxidoreductase subunit A"/>
    <property type="match status" value="1"/>
</dbReference>
<dbReference type="Gene3D" id="1.20.58.1610">
    <property type="entry name" value="NADH:ubiquinone/plastoquinone oxidoreductase, chain 3"/>
    <property type="match status" value="1"/>
</dbReference>
<dbReference type="HAMAP" id="MF_01394">
    <property type="entry name" value="NDH1_NuoA"/>
    <property type="match status" value="1"/>
</dbReference>
<dbReference type="InterPro" id="IPR023043">
    <property type="entry name" value="NAD(P)H_OxRDtase_bac/plastid"/>
</dbReference>
<dbReference type="InterPro" id="IPR000440">
    <property type="entry name" value="NADH_UbQ/plastoQ_OxRdtase_su3"/>
</dbReference>
<dbReference type="InterPro" id="IPR038430">
    <property type="entry name" value="NDAH_ubi_oxred_su3_sf"/>
</dbReference>
<dbReference type="PANTHER" id="PTHR11058">
    <property type="entry name" value="NADH-UBIQUINONE OXIDOREDUCTASE CHAIN 3"/>
    <property type="match status" value="1"/>
</dbReference>
<dbReference type="PANTHER" id="PTHR11058:SF9">
    <property type="entry name" value="NADH-UBIQUINONE OXIDOREDUCTASE CHAIN 3"/>
    <property type="match status" value="1"/>
</dbReference>
<dbReference type="Pfam" id="PF00507">
    <property type="entry name" value="Oxidored_q4"/>
    <property type="match status" value="1"/>
</dbReference>
<name>NUOA_VEREI</name>